<evidence type="ECO:0000255" key="1">
    <source>
        <dbReference type="HAMAP-Rule" id="MF_00051"/>
    </source>
</evidence>
<gene>
    <name evidence="1" type="primary">glyA</name>
    <name type="ordered locus">FTN_1259</name>
</gene>
<reference key="1">
    <citation type="journal article" date="2007" name="Genome Biol.">
        <title>Comparison of Francisella tularensis genomes reveals evolutionary events associated with the emergence of human pathogenic strains.</title>
        <authorList>
            <person name="Rohmer L."/>
            <person name="Fong C."/>
            <person name="Abmayr S."/>
            <person name="Wasnick M."/>
            <person name="Larson Freeman T.J."/>
            <person name="Radey M."/>
            <person name="Guina T."/>
            <person name="Svensson K."/>
            <person name="Hayden H.S."/>
            <person name="Jacobs M."/>
            <person name="Gallagher L.A."/>
            <person name="Manoil C."/>
            <person name="Ernst R.K."/>
            <person name="Drees B."/>
            <person name="Buckley D."/>
            <person name="Haugen E."/>
            <person name="Bovee D."/>
            <person name="Zhou Y."/>
            <person name="Chang J."/>
            <person name="Levy R."/>
            <person name="Lim R."/>
            <person name="Gillett W."/>
            <person name="Guenthener D."/>
            <person name="Kang A."/>
            <person name="Shaffer S.A."/>
            <person name="Taylor G."/>
            <person name="Chen J."/>
            <person name="Gallis B."/>
            <person name="D'Argenio D.A."/>
            <person name="Forsman M."/>
            <person name="Olson M.V."/>
            <person name="Goodlett D.R."/>
            <person name="Kaul R."/>
            <person name="Miller S.I."/>
            <person name="Brittnacher M.J."/>
        </authorList>
    </citation>
    <scope>NUCLEOTIDE SEQUENCE [LARGE SCALE GENOMIC DNA]</scope>
    <source>
        <strain>U112</strain>
    </source>
</reference>
<accession>A0Q7C5</accession>
<organism>
    <name type="scientific">Francisella tularensis subsp. novicida (strain U112)</name>
    <dbReference type="NCBI Taxonomy" id="401614"/>
    <lineage>
        <taxon>Bacteria</taxon>
        <taxon>Pseudomonadati</taxon>
        <taxon>Pseudomonadota</taxon>
        <taxon>Gammaproteobacteria</taxon>
        <taxon>Thiotrichales</taxon>
        <taxon>Francisellaceae</taxon>
        <taxon>Francisella</taxon>
    </lineage>
</organism>
<proteinExistence type="inferred from homology"/>
<comment type="function">
    <text evidence="1">Catalyzes the reversible interconversion of serine and glycine with tetrahydrofolate (THF) serving as the one-carbon carrier. This reaction serves as the major source of one-carbon groups required for the biosynthesis of purines, thymidylate, methionine, and other important biomolecules. Also exhibits THF-independent aldolase activity toward beta-hydroxyamino acids, producing glycine and aldehydes, via a retro-aldol mechanism.</text>
</comment>
<comment type="catalytic activity">
    <reaction evidence="1">
        <text>(6R)-5,10-methylene-5,6,7,8-tetrahydrofolate + glycine + H2O = (6S)-5,6,7,8-tetrahydrofolate + L-serine</text>
        <dbReference type="Rhea" id="RHEA:15481"/>
        <dbReference type="ChEBI" id="CHEBI:15377"/>
        <dbReference type="ChEBI" id="CHEBI:15636"/>
        <dbReference type="ChEBI" id="CHEBI:33384"/>
        <dbReference type="ChEBI" id="CHEBI:57305"/>
        <dbReference type="ChEBI" id="CHEBI:57453"/>
        <dbReference type="EC" id="2.1.2.1"/>
    </reaction>
</comment>
<comment type="cofactor">
    <cofactor evidence="1">
        <name>pyridoxal 5'-phosphate</name>
        <dbReference type="ChEBI" id="CHEBI:597326"/>
    </cofactor>
</comment>
<comment type="pathway">
    <text evidence="1">One-carbon metabolism; tetrahydrofolate interconversion.</text>
</comment>
<comment type="pathway">
    <text evidence="1">Amino-acid biosynthesis; glycine biosynthesis; glycine from L-serine: step 1/1.</text>
</comment>
<comment type="subunit">
    <text evidence="1">Homodimer.</text>
</comment>
<comment type="subcellular location">
    <subcellularLocation>
        <location evidence="1">Cytoplasm</location>
    </subcellularLocation>
</comment>
<comment type="similarity">
    <text evidence="1">Belongs to the SHMT family.</text>
</comment>
<protein>
    <recommendedName>
        <fullName evidence="1">Serine hydroxymethyltransferase</fullName>
        <shortName evidence="1">SHMT</shortName>
        <shortName evidence="1">Serine methylase</shortName>
        <ecNumber evidence="1">2.1.2.1</ecNumber>
    </recommendedName>
</protein>
<dbReference type="EC" id="2.1.2.1" evidence="1"/>
<dbReference type="EMBL" id="CP000439">
    <property type="protein sequence ID" value="ABK90140.1"/>
    <property type="molecule type" value="Genomic_DNA"/>
</dbReference>
<dbReference type="RefSeq" id="WP_003040011.1">
    <property type="nucleotide sequence ID" value="NC_008601.1"/>
</dbReference>
<dbReference type="SMR" id="A0Q7C5"/>
<dbReference type="KEGG" id="ftn:FTN_1259"/>
<dbReference type="KEGG" id="ftx:AW25_747"/>
<dbReference type="BioCyc" id="FTUL401614:G1G75-1304-MONOMER"/>
<dbReference type="UniPathway" id="UPA00193"/>
<dbReference type="UniPathway" id="UPA00288">
    <property type="reaction ID" value="UER01023"/>
</dbReference>
<dbReference type="Proteomes" id="UP000000762">
    <property type="component" value="Chromosome"/>
</dbReference>
<dbReference type="GO" id="GO:0005829">
    <property type="term" value="C:cytosol"/>
    <property type="evidence" value="ECO:0007669"/>
    <property type="project" value="TreeGrafter"/>
</dbReference>
<dbReference type="GO" id="GO:0004372">
    <property type="term" value="F:glycine hydroxymethyltransferase activity"/>
    <property type="evidence" value="ECO:0007669"/>
    <property type="project" value="UniProtKB-UniRule"/>
</dbReference>
<dbReference type="GO" id="GO:0030170">
    <property type="term" value="F:pyridoxal phosphate binding"/>
    <property type="evidence" value="ECO:0007669"/>
    <property type="project" value="UniProtKB-UniRule"/>
</dbReference>
<dbReference type="GO" id="GO:0019264">
    <property type="term" value="P:glycine biosynthetic process from serine"/>
    <property type="evidence" value="ECO:0007669"/>
    <property type="project" value="UniProtKB-UniRule"/>
</dbReference>
<dbReference type="GO" id="GO:0035999">
    <property type="term" value="P:tetrahydrofolate interconversion"/>
    <property type="evidence" value="ECO:0007669"/>
    <property type="project" value="UniProtKB-UniRule"/>
</dbReference>
<dbReference type="CDD" id="cd00378">
    <property type="entry name" value="SHMT"/>
    <property type="match status" value="1"/>
</dbReference>
<dbReference type="FunFam" id="3.40.640.10:FF:000001">
    <property type="entry name" value="Serine hydroxymethyltransferase"/>
    <property type="match status" value="1"/>
</dbReference>
<dbReference type="FunFam" id="3.90.1150.10:FF:000003">
    <property type="entry name" value="Serine hydroxymethyltransferase"/>
    <property type="match status" value="1"/>
</dbReference>
<dbReference type="Gene3D" id="3.90.1150.10">
    <property type="entry name" value="Aspartate Aminotransferase, domain 1"/>
    <property type="match status" value="1"/>
</dbReference>
<dbReference type="Gene3D" id="3.40.640.10">
    <property type="entry name" value="Type I PLP-dependent aspartate aminotransferase-like (Major domain)"/>
    <property type="match status" value="1"/>
</dbReference>
<dbReference type="HAMAP" id="MF_00051">
    <property type="entry name" value="SHMT"/>
    <property type="match status" value="1"/>
</dbReference>
<dbReference type="InterPro" id="IPR015424">
    <property type="entry name" value="PyrdxlP-dep_Trfase"/>
</dbReference>
<dbReference type="InterPro" id="IPR015421">
    <property type="entry name" value="PyrdxlP-dep_Trfase_major"/>
</dbReference>
<dbReference type="InterPro" id="IPR015422">
    <property type="entry name" value="PyrdxlP-dep_Trfase_small"/>
</dbReference>
<dbReference type="InterPro" id="IPR001085">
    <property type="entry name" value="Ser_HO-MeTrfase"/>
</dbReference>
<dbReference type="InterPro" id="IPR049943">
    <property type="entry name" value="Ser_HO-MeTrfase-like"/>
</dbReference>
<dbReference type="InterPro" id="IPR019798">
    <property type="entry name" value="Ser_HO-MeTrfase_PLP_BS"/>
</dbReference>
<dbReference type="InterPro" id="IPR039429">
    <property type="entry name" value="SHMT-like_dom"/>
</dbReference>
<dbReference type="NCBIfam" id="NF000586">
    <property type="entry name" value="PRK00011.1"/>
    <property type="match status" value="1"/>
</dbReference>
<dbReference type="PANTHER" id="PTHR11680">
    <property type="entry name" value="SERINE HYDROXYMETHYLTRANSFERASE"/>
    <property type="match status" value="1"/>
</dbReference>
<dbReference type="PANTHER" id="PTHR11680:SF50">
    <property type="entry name" value="SERINE HYDROXYMETHYLTRANSFERASE"/>
    <property type="match status" value="1"/>
</dbReference>
<dbReference type="Pfam" id="PF00464">
    <property type="entry name" value="SHMT"/>
    <property type="match status" value="1"/>
</dbReference>
<dbReference type="PIRSF" id="PIRSF000412">
    <property type="entry name" value="SHMT"/>
    <property type="match status" value="1"/>
</dbReference>
<dbReference type="SUPFAM" id="SSF53383">
    <property type="entry name" value="PLP-dependent transferases"/>
    <property type="match status" value="1"/>
</dbReference>
<dbReference type="PROSITE" id="PS00096">
    <property type="entry name" value="SHMT"/>
    <property type="match status" value="1"/>
</dbReference>
<keyword id="KW-0028">Amino-acid biosynthesis</keyword>
<keyword id="KW-0963">Cytoplasm</keyword>
<keyword id="KW-0554">One-carbon metabolism</keyword>
<keyword id="KW-0663">Pyridoxal phosphate</keyword>
<keyword id="KW-0808">Transferase</keyword>
<name>GLYA_FRATN</name>
<feature type="chain" id="PRO_1000006253" description="Serine hydroxymethyltransferase">
    <location>
        <begin position="1"/>
        <end position="417"/>
    </location>
</feature>
<feature type="binding site" evidence="1">
    <location>
        <position position="122"/>
    </location>
    <ligand>
        <name>(6S)-5,6,7,8-tetrahydrofolate</name>
        <dbReference type="ChEBI" id="CHEBI:57453"/>
    </ligand>
</feature>
<feature type="binding site" evidence="1">
    <location>
        <begin position="126"/>
        <end position="128"/>
    </location>
    <ligand>
        <name>(6S)-5,6,7,8-tetrahydrofolate</name>
        <dbReference type="ChEBI" id="CHEBI:57453"/>
    </ligand>
</feature>
<feature type="binding site" evidence="1">
    <location>
        <begin position="355"/>
        <end position="357"/>
    </location>
    <ligand>
        <name>(6S)-5,6,7,8-tetrahydrofolate</name>
        <dbReference type="ChEBI" id="CHEBI:57453"/>
    </ligand>
</feature>
<feature type="site" description="Plays an important role in substrate specificity" evidence="1">
    <location>
        <position position="229"/>
    </location>
</feature>
<feature type="modified residue" description="N6-(pyridoxal phosphate)lysine" evidence="1">
    <location>
        <position position="230"/>
    </location>
</feature>
<sequence>MFSFEKNSLKNTDKEIFDAIELEVKRQHEHVELIASENYASPAVMEAQGSQLTNKYAEGYHGKRYYGGCEFVDIAEKLAIERAQQLFGVDYANVQPHSGSQANAAVYNAVLKPGDTVLGMDLGAGGHLTHGSKVNFSGKIYNSIQYGLDENGDIDYEQVAQLAKEHKPKMIIAGFSAFSGIINWQKFREIADSVDAVLMADIAHVAGLVAAGVYPNPFPYVDVATTTTHKTLRGPRGGLILCNNNPELAKKFQSAIFPGIQGGPLMHVIAAKAVAFKEALEPSFVDYQKQVLKNAKAMEKVLKQRGINIISGGTSNHLLLLDITNTGFSGKEAEAALGRANITVNKNSIPNDPRSPFVTSGLRIGSPAITTRGFKEKECELVANLLADVVFNCGDEKVENETAAKILDLCDKFPVYK</sequence>